<protein>
    <recommendedName>
        <fullName>Thylakoid membrane protein slr0575</fullName>
    </recommendedName>
</protein>
<organism>
    <name type="scientific">Synechocystis sp. (strain ATCC 27184 / PCC 6803 / Kazusa)</name>
    <dbReference type="NCBI Taxonomy" id="1111708"/>
    <lineage>
        <taxon>Bacteria</taxon>
        <taxon>Bacillati</taxon>
        <taxon>Cyanobacteriota</taxon>
        <taxon>Cyanophyceae</taxon>
        <taxon>Synechococcales</taxon>
        <taxon>Merismopediaceae</taxon>
        <taxon>Synechocystis</taxon>
    </lineage>
</organism>
<accession>Q55403</accession>
<sequence length="184" mass="20320">MLPKISLAAVGLTVGGILTITGFVAYALDYATLNLAGFFYGIPLVLGGLALKAAELKPIPFSQPTSEKIIALRNQLATPTQNQIRKDVTRYRYGQEAHLDESLERLGLSPTDEERPVLTSLLEQDWEGKYVLTLTFTSPFISLETWQEKQEKIAKFFGPDLEVTVAEPEEKVVTVNLISQLALP</sequence>
<comment type="subcellular location">
    <subcellularLocation>
        <location evidence="2">Cellular thylakoid membrane</location>
        <topology evidence="2">Multi-pass membrane protein</topology>
    </subcellularLocation>
</comment>
<gene>
    <name type="ordered locus">slr0575</name>
</gene>
<proteinExistence type="predicted"/>
<evidence type="ECO:0000255" key="1"/>
<evidence type="ECO:0000269" key="2">
    <source>
    </source>
</evidence>
<feature type="chain" id="PRO_0000352748" description="Thylakoid membrane protein slr0575">
    <location>
        <begin position="1"/>
        <end position="184"/>
    </location>
</feature>
<feature type="transmembrane region" description="Helical" evidence="1">
    <location>
        <begin position="5"/>
        <end position="25"/>
    </location>
</feature>
<feature type="transmembrane region" description="Helical" evidence="1">
    <location>
        <begin position="31"/>
        <end position="51"/>
    </location>
</feature>
<name>Y575_SYNY3</name>
<reference key="1">
    <citation type="journal article" date="1996" name="DNA Res.">
        <title>Sequence analysis of the genome of the unicellular cyanobacterium Synechocystis sp. strain PCC6803. II. Sequence determination of the entire genome and assignment of potential protein-coding regions.</title>
        <authorList>
            <person name="Kaneko T."/>
            <person name="Sato S."/>
            <person name="Kotani H."/>
            <person name="Tanaka A."/>
            <person name="Asamizu E."/>
            <person name="Nakamura Y."/>
            <person name="Miyajima N."/>
            <person name="Hirosawa M."/>
            <person name="Sugiura M."/>
            <person name="Sasamoto S."/>
            <person name="Kimura T."/>
            <person name="Hosouchi T."/>
            <person name="Matsuno A."/>
            <person name="Muraki A."/>
            <person name="Nakazaki N."/>
            <person name="Naruo K."/>
            <person name="Okumura S."/>
            <person name="Shimpo S."/>
            <person name="Takeuchi C."/>
            <person name="Wada T."/>
            <person name="Watanabe A."/>
            <person name="Yamada M."/>
            <person name="Yasuda M."/>
            <person name="Tabata S."/>
        </authorList>
    </citation>
    <scope>NUCLEOTIDE SEQUENCE [LARGE SCALE GENOMIC DNA]</scope>
    <source>
        <strain>ATCC 27184 / PCC 6803 / Kazusa</strain>
    </source>
</reference>
<reference key="2">
    <citation type="journal article" date="2005" name="Proteomics">
        <title>Proteomic studies of the thylakoid membrane of Synechocystis sp. PCC 6803.</title>
        <authorList>
            <person name="Srivastava R."/>
            <person name="Pisareva T."/>
            <person name="Norling B."/>
        </authorList>
    </citation>
    <scope>SUBCELLULAR LOCATION IN THYLAKOID</scope>
</reference>
<keyword id="KW-0472">Membrane</keyword>
<keyword id="KW-1185">Reference proteome</keyword>
<keyword id="KW-0793">Thylakoid</keyword>
<keyword id="KW-0812">Transmembrane</keyword>
<keyword id="KW-1133">Transmembrane helix</keyword>
<dbReference type="EMBL" id="BA000022">
    <property type="protein sequence ID" value="BAA10497.1"/>
    <property type="molecule type" value="Genomic_DNA"/>
</dbReference>
<dbReference type="PIR" id="S75762">
    <property type="entry name" value="S75762"/>
</dbReference>
<dbReference type="SMR" id="Q55403"/>
<dbReference type="STRING" id="1148.gene:10500001"/>
<dbReference type="PaxDb" id="1148-1001253"/>
<dbReference type="EnsemblBacteria" id="BAA10497">
    <property type="protein sequence ID" value="BAA10497"/>
    <property type="gene ID" value="BAA10497"/>
</dbReference>
<dbReference type="KEGG" id="syn:slr0575"/>
<dbReference type="eggNOG" id="ENOG502ZBJ3">
    <property type="taxonomic scope" value="Bacteria"/>
</dbReference>
<dbReference type="InParanoid" id="Q55403"/>
<dbReference type="PhylomeDB" id="Q55403"/>
<dbReference type="Proteomes" id="UP000001425">
    <property type="component" value="Chromosome"/>
</dbReference>
<dbReference type="GO" id="GO:0031676">
    <property type="term" value="C:plasma membrane-derived thylakoid membrane"/>
    <property type="evidence" value="ECO:0007669"/>
    <property type="project" value="UniProtKB-SubCell"/>
</dbReference>
<dbReference type="InterPro" id="IPR021275">
    <property type="entry name" value="DUF2854"/>
</dbReference>
<dbReference type="PANTHER" id="PTHR35551">
    <property type="match status" value="1"/>
</dbReference>
<dbReference type="PANTHER" id="PTHR35551:SF1">
    <property type="entry name" value="ACCLIMATION OF PHOTOSYNTHESIS TO ENVIRONMENT"/>
    <property type="match status" value="1"/>
</dbReference>
<dbReference type="Pfam" id="PF11016">
    <property type="entry name" value="DUF2854"/>
    <property type="match status" value="1"/>
</dbReference>